<organism>
    <name type="scientific">Aspergillus niger (strain ATCC MYA-4892 / CBS 513.88 / FGSC A1513)</name>
    <dbReference type="NCBI Taxonomy" id="425011"/>
    <lineage>
        <taxon>Eukaryota</taxon>
        <taxon>Fungi</taxon>
        <taxon>Dikarya</taxon>
        <taxon>Ascomycota</taxon>
        <taxon>Pezizomycotina</taxon>
        <taxon>Eurotiomycetes</taxon>
        <taxon>Eurotiomycetidae</taxon>
        <taxon>Eurotiales</taxon>
        <taxon>Aspergillaceae</taxon>
        <taxon>Aspergillus</taxon>
        <taxon>Aspergillus subgen. Circumdati</taxon>
    </lineage>
</organism>
<reference key="1">
    <citation type="journal article" date="2007" name="Nat. Biotechnol.">
        <title>Genome sequencing and analysis of the versatile cell factory Aspergillus niger CBS 513.88.</title>
        <authorList>
            <person name="Pel H.J."/>
            <person name="de Winde J.H."/>
            <person name="Archer D.B."/>
            <person name="Dyer P.S."/>
            <person name="Hofmann G."/>
            <person name="Schaap P.J."/>
            <person name="Turner G."/>
            <person name="de Vries R.P."/>
            <person name="Albang R."/>
            <person name="Albermann K."/>
            <person name="Andersen M.R."/>
            <person name="Bendtsen J.D."/>
            <person name="Benen J.A.E."/>
            <person name="van den Berg M."/>
            <person name="Breestraat S."/>
            <person name="Caddick M.X."/>
            <person name="Contreras R."/>
            <person name="Cornell M."/>
            <person name="Coutinho P.M."/>
            <person name="Danchin E.G.J."/>
            <person name="Debets A.J.M."/>
            <person name="Dekker P."/>
            <person name="van Dijck P.W.M."/>
            <person name="van Dijk A."/>
            <person name="Dijkhuizen L."/>
            <person name="Driessen A.J.M."/>
            <person name="d'Enfert C."/>
            <person name="Geysens S."/>
            <person name="Goosen C."/>
            <person name="Groot G.S.P."/>
            <person name="de Groot P.W.J."/>
            <person name="Guillemette T."/>
            <person name="Henrissat B."/>
            <person name="Herweijer M."/>
            <person name="van den Hombergh J.P.T.W."/>
            <person name="van den Hondel C.A.M.J.J."/>
            <person name="van der Heijden R.T.J.M."/>
            <person name="van der Kaaij R.M."/>
            <person name="Klis F.M."/>
            <person name="Kools H.J."/>
            <person name="Kubicek C.P."/>
            <person name="van Kuyk P.A."/>
            <person name="Lauber J."/>
            <person name="Lu X."/>
            <person name="van der Maarel M.J.E.C."/>
            <person name="Meulenberg R."/>
            <person name="Menke H."/>
            <person name="Mortimer M.A."/>
            <person name="Nielsen J."/>
            <person name="Oliver S.G."/>
            <person name="Olsthoorn M."/>
            <person name="Pal K."/>
            <person name="van Peij N.N.M.E."/>
            <person name="Ram A.F.J."/>
            <person name="Rinas U."/>
            <person name="Roubos J.A."/>
            <person name="Sagt C.M.J."/>
            <person name="Schmoll M."/>
            <person name="Sun J."/>
            <person name="Ussery D."/>
            <person name="Varga J."/>
            <person name="Vervecken W."/>
            <person name="van de Vondervoort P.J.J."/>
            <person name="Wedler H."/>
            <person name="Woesten H.A.B."/>
            <person name="Zeng A.-P."/>
            <person name="van Ooyen A.J.J."/>
            <person name="Visser J."/>
            <person name="Stam H."/>
        </authorList>
    </citation>
    <scope>NUCLEOTIDE SEQUENCE [LARGE SCALE GENOMIC DNA]</scope>
    <source>
        <strain>ATCC MYA-4892 / CBS 513.88 / FGSC A1513</strain>
    </source>
</reference>
<comment type="function">
    <text evidence="1">Required for efficient assembly and nuclear export of the 60S ribosomal subunit.</text>
</comment>
<comment type="subunit">
    <text evidence="1">Component of the 66S pre-ribosomal particle.</text>
</comment>
<comment type="subcellular location">
    <subcellularLocation>
        <location evidence="1">Nucleus</location>
        <location evidence="1">Nucleolus</location>
    </subcellularLocation>
</comment>
<comment type="similarity">
    <text evidence="4">Belongs to the LOC1 family.</text>
</comment>
<name>LOC1_ASPNC</name>
<dbReference type="EMBL" id="AM270331">
    <property type="protein sequence ID" value="CAK42237.1"/>
    <property type="molecule type" value="Genomic_DNA"/>
</dbReference>
<dbReference type="RefSeq" id="XP_001396607.1">
    <property type="nucleotide sequence ID" value="XM_001396570.1"/>
</dbReference>
<dbReference type="SMR" id="A2R4J9"/>
<dbReference type="EnsemblFungi" id="CAK42237">
    <property type="protein sequence ID" value="CAK42237"/>
    <property type="gene ID" value="An15g00680"/>
</dbReference>
<dbReference type="GeneID" id="4987667"/>
<dbReference type="KEGG" id="ang:An15g00680"/>
<dbReference type="VEuPathDB" id="FungiDB:An15g00680"/>
<dbReference type="HOGENOM" id="CLU_096593_0_0_1"/>
<dbReference type="Proteomes" id="UP000006706">
    <property type="component" value="Chromosome 3R"/>
</dbReference>
<dbReference type="GO" id="GO:0005730">
    <property type="term" value="C:nucleolus"/>
    <property type="evidence" value="ECO:0007669"/>
    <property type="project" value="UniProtKB-SubCell"/>
</dbReference>
<dbReference type="GO" id="GO:0030687">
    <property type="term" value="C:preribosome, large subunit precursor"/>
    <property type="evidence" value="ECO:0007669"/>
    <property type="project" value="TreeGrafter"/>
</dbReference>
<dbReference type="GO" id="GO:0003729">
    <property type="term" value="F:mRNA binding"/>
    <property type="evidence" value="ECO:0007669"/>
    <property type="project" value="InterPro"/>
</dbReference>
<dbReference type="GO" id="GO:0008298">
    <property type="term" value="P:intracellular mRNA localization"/>
    <property type="evidence" value="ECO:0007669"/>
    <property type="project" value="TreeGrafter"/>
</dbReference>
<dbReference type="GO" id="GO:0051028">
    <property type="term" value="P:mRNA transport"/>
    <property type="evidence" value="ECO:0007669"/>
    <property type="project" value="UniProtKB-KW"/>
</dbReference>
<dbReference type="GO" id="GO:0042273">
    <property type="term" value="P:ribosomal large subunit biogenesis"/>
    <property type="evidence" value="ECO:0007669"/>
    <property type="project" value="InterPro"/>
</dbReference>
<dbReference type="InterPro" id="IPR037650">
    <property type="entry name" value="Loc1"/>
</dbReference>
<dbReference type="PANTHER" id="PTHR28028">
    <property type="entry name" value="60S RIBOSOMAL SUBUNIT ASSEMBLY/EXPORT PROTEIN LOC1"/>
    <property type="match status" value="1"/>
</dbReference>
<dbReference type="PANTHER" id="PTHR28028:SF1">
    <property type="entry name" value="60S RIBOSOMAL SUBUNIT ASSEMBLY_EXPORT PROTEIN LOC1"/>
    <property type="match status" value="1"/>
</dbReference>
<accession>A2R4J9</accession>
<gene>
    <name type="primary">loc1</name>
    <name type="ORF">An15g00680</name>
</gene>
<sequence length="189" mass="20623">MAPTKGSGSGKASNKGDAKKSKPLSSASKVNKKTAKRPPPKEVKSKARTESSLLKKTKKREYTEEELGLPKLNAITPVGVVKPKGKKKGKTFVDDAEGMMTILAMVNAEKEGQIESKMMKARQLEEIREAKRKEAEARQAQKKSKLEDAKQSIRQKRKHKGGSSETKAEAPTKESSSKSKGKKKSVAFA</sequence>
<proteinExistence type="inferred from homology"/>
<keyword id="KW-0175">Coiled coil</keyword>
<keyword id="KW-0509">mRNA transport</keyword>
<keyword id="KW-0539">Nucleus</keyword>
<keyword id="KW-1185">Reference proteome</keyword>
<keyword id="KW-0690">Ribosome biogenesis</keyword>
<keyword id="KW-0813">Transport</keyword>
<evidence type="ECO:0000250" key="1"/>
<evidence type="ECO:0000255" key="2"/>
<evidence type="ECO:0000256" key="3">
    <source>
        <dbReference type="SAM" id="MobiDB-lite"/>
    </source>
</evidence>
<evidence type="ECO:0000305" key="4"/>
<protein>
    <recommendedName>
        <fullName>60S ribosomal subunit assembly/export protein loc1</fullName>
    </recommendedName>
</protein>
<feature type="chain" id="PRO_0000308786" description="60S ribosomal subunit assembly/export protein loc1">
    <location>
        <begin position="1"/>
        <end position="189"/>
    </location>
</feature>
<feature type="region of interest" description="Disordered" evidence="3">
    <location>
        <begin position="1"/>
        <end position="69"/>
    </location>
</feature>
<feature type="region of interest" description="Disordered" evidence="3">
    <location>
        <begin position="130"/>
        <end position="189"/>
    </location>
</feature>
<feature type="coiled-coil region" evidence="2">
    <location>
        <begin position="106"/>
        <end position="160"/>
    </location>
</feature>
<feature type="compositionally biased region" description="Basic and acidic residues" evidence="3">
    <location>
        <begin position="39"/>
        <end position="49"/>
    </location>
</feature>
<feature type="compositionally biased region" description="Basic and acidic residues" evidence="3">
    <location>
        <begin position="130"/>
        <end position="151"/>
    </location>
</feature>
<feature type="compositionally biased region" description="Basic and acidic residues" evidence="3">
    <location>
        <begin position="166"/>
        <end position="177"/>
    </location>
</feature>
<feature type="compositionally biased region" description="Basic residues" evidence="3">
    <location>
        <begin position="179"/>
        <end position="189"/>
    </location>
</feature>